<sequence length="344" mass="36929">MALPRPTSPHARGSNRTPAIMRLVLGACVPGLLTLTWLYGPGTLLNLAWASLVALACEAAMLALRKRPPGVFLKDGSALVTALLLAVALPPYAPWWLTLVATFFALVFGKHLYGGLGQNPFNPAMLGYVVALVSFPLEMTRWPSPDSALGLPDSLREFLGLATRPDAWAHATALDVLKTDRSLTVDELFAGNPAFGHLGSAGSEWVNLAFLLGGLFLLWRRLFTWHAPLGMLAGLFAMSLLFWNGSGSDSHGSPLFHLFSGATMLGAFFIVTDPVSGATSNRGRLVFGLGVGVLTYVIRAWGGYPDGMAFAVLLMNLAAPTIDYYTRPRTYGHRKAERGFKAGD</sequence>
<reference key="1">
    <citation type="journal article" date="2009" name="Genome Res.">
        <title>Newly introduced genomic prophage islands are critical determinants of in vivo competitiveness in the Liverpool epidemic strain of Pseudomonas aeruginosa.</title>
        <authorList>
            <person name="Winstanley C."/>
            <person name="Langille M.G.I."/>
            <person name="Fothergill J.L."/>
            <person name="Kukavica-Ibrulj I."/>
            <person name="Paradis-Bleau C."/>
            <person name="Sanschagrin F."/>
            <person name="Thomson N.R."/>
            <person name="Winsor G.L."/>
            <person name="Quail M.A."/>
            <person name="Lennard N."/>
            <person name="Bignell A."/>
            <person name="Clarke L."/>
            <person name="Seeger K."/>
            <person name="Saunders D."/>
            <person name="Harris D."/>
            <person name="Parkhill J."/>
            <person name="Hancock R.E.W."/>
            <person name="Brinkman F.S.L."/>
            <person name="Levesque R.C."/>
        </authorList>
    </citation>
    <scope>NUCLEOTIDE SEQUENCE [LARGE SCALE GENOMIC DNA]</scope>
    <source>
        <strain>LESB58</strain>
    </source>
</reference>
<organism>
    <name type="scientific">Pseudomonas aeruginosa (strain LESB58)</name>
    <dbReference type="NCBI Taxonomy" id="557722"/>
    <lineage>
        <taxon>Bacteria</taxon>
        <taxon>Pseudomonadati</taxon>
        <taxon>Pseudomonadota</taxon>
        <taxon>Gammaproteobacteria</taxon>
        <taxon>Pseudomonadales</taxon>
        <taxon>Pseudomonadaceae</taxon>
        <taxon>Pseudomonas</taxon>
    </lineage>
</organism>
<evidence type="ECO:0000255" key="1">
    <source>
        <dbReference type="HAMAP-Rule" id="MF_00462"/>
    </source>
</evidence>
<protein>
    <recommendedName>
        <fullName evidence="1">Ion-translocating oxidoreductase complex subunit D</fullName>
        <ecNumber evidence="1">7.-.-.-</ecNumber>
    </recommendedName>
    <alternativeName>
        <fullName evidence="1">Rnf electron transport complex subunit D</fullName>
    </alternativeName>
</protein>
<name>RNFD_PSEA8</name>
<feature type="chain" id="PRO_1000125390" description="Ion-translocating oxidoreductase complex subunit D">
    <location>
        <begin position="1"/>
        <end position="344"/>
    </location>
</feature>
<feature type="transmembrane region" description="Helical" evidence="1">
    <location>
        <begin position="23"/>
        <end position="43"/>
    </location>
</feature>
<feature type="transmembrane region" description="Helical" evidence="1">
    <location>
        <begin position="44"/>
        <end position="64"/>
    </location>
</feature>
<feature type="transmembrane region" description="Helical" evidence="1">
    <location>
        <begin position="77"/>
        <end position="99"/>
    </location>
</feature>
<feature type="transmembrane region" description="Helical" evidence="1">
    <location>
        <begin position="120"/>
        <end position="140"/>
    </location>
</feature>
<feature type="transmembrane region" description="Helical" evidence="1">
    <location>
        <begin position="198"/>
        <end position="218"/>
    </location>
</feature>
<feature type="transmembrane region" description="Helical" evidence="1">
    <location>
        <begin position="222"/>
        <end position="242"/>
    </location>
</feature>
<feature type="transmembrane region" description="Helical" evidence="1">
    <location>
        <begin position="252"/>
        <end position="272"/>
    </location>
</feature>
<feature type="transmembrane region" description="Helical" evidence="1">
    <location>
        <begin position="285"/>
        <end position="305"/>
    </location>
</feature>
<feature type="transmembrane region" description="Helical" evidence="1">
    <location>
        <begin position="306"/>
        <end position="326"/>
    </location>
</feature>
<feature type="modified residue" description="FMN phosphoryl threonine" evidence="1">
    <location>
        <position position="172"/>
    </location>
</feature>
<comment type="function">
    <text evidence="1">Part of a membrane-bound complex that couples electron transfer with translocation of ions across the membrane.</text>
</comment>
<comment type="cofactor">
    <cofactor evidence="1">
        <name>FMN</name>
        <dbReference type="ChEBI" id="CHEBI:58210"/>
    </cofactor>
</comment>
<comment type="subunit">
    <text evidence="1">The complex is composed of six subunits: RnfA, RnfB, RnfC, RnfD, RnfE and RnfG.</text>
</comment>
<comment type="subcellular location">
    <subcellularLocation>
        <location evidence="1">Cell inner membrane</location>
        <topology evidence="1">Multi-pass membrane protein</topology>
    </subcellularLocation>
</comment>
<comment type="similarity">
    <text evidence="1">Belongs to the NqrB/RnfD family.</text>
</comment>
<accession>B7UVX0</accession>
<keyword id="KW-0997">Cell inner membrane</keyword>
<keyword id="KW-1003">Cell membrane</keyword>
<keyword id="KW-0249">Electron transport</keyword>
<keyword id="KW-0285">Flavoprotein</keyword>
<keyword id="KW-0288">FMN</keyword>
<keyword id="KW-0472">Membrane</keyword>
<keyword id="KW-0597">Phosphoprotein</keyword>
<keyword id="KW-1278">Translocase</keyword>
<keyword id="KW-0812">Transmembrane</keyword>
<keyword id="KW-1133">Transmembrane helix</keyword>
<keyword id="KW-0813">Transport</keyword>
<proteinExistence type="inferred from homology"/>
<dbReference type="EC" id="7.-.-.-" evidence="1"/>
<dbReference type="EMBL" id="FM209186">
    <property type="protein sequence ID" value="CAW26251.1"/>
    <property type="molecule type" value="Genomic_DNA"/>
</dbReference>
<dbReference type="RefSeq" id="WP_012613757.1">
    <property type="nucleotide sequence ID" value="NC_011770.1"/>
</dbReference>
<dbReference type="SMR" id="B7UVX0"/>
<dbReference type="KEGG" id="pag:PLES_15231"/>
<dbReference type="HOGENOM" id="CLU_042020_0_0_6"/>
<dbReference type="GO" id="GO:0005886">
    <property type="term" value="C:plasma membrane"/>
    <property type="evidence" value="ECO:0007669"/>
    <property type="project" value="UniProtKB-SubCell"/>
</dbReference>
<dbReference type="GO" id="GO:0022900">
    <property type="term" value="P:electron transport chain"/>
    <property type="evidence" value="ECO:0007669"/>
    <property type="project" value="UniProtKB-UniRule"/>
</dbReference>
<dbReference type="GO" id="GO:0055085">
    <property type="term" value="P:transmembrane transport"/>
    <property type="evidence" value="ECO:0007669"/>
    <property type="project" value="InterPro"/>
</dbReference>
<dbReference type="HAMAP" id="MF_00462">
    <property type="entry name" value="RsxD_RnfD"/>
    <property type="match status" value="1"/>
</dbReference>
<dbReference type="InterPro" id="IPR004338">
    <property type="entry name" value="NqrB/RnfD"/>
</dbReference>
<dbReference type="InterPro" id="IPR011303">
    <property type="entry name" value="RnfD_bac"/>
</dbReference>
<dbReference type="NCBIfam" id="TIGR01946">
    <property type="entry name" value="rnfD"/>
    <property type="match status" value="1"/>
</dbReference>
<dbReference type="PANTHER" id="PTHR30578">
    <property type="entry name" value="ELECTRON TRANSPORT COMPLEX PROTEIN RNFD"/>
    <property type="match status" value="1"/>
</dbReference>
<dbReference type="PANTHER" id="PTHR30578:SF0">
    <property type="entry name" value="ION-TRANSLOCATING OXIDOREDUCTASE COMPLEX SUBUNIT D"/>
    <property type="match status" value="1"/>
</dbReference>
<dbReference type="Pfam" id="PF03116">
    <property type="entry name" value="NQR2_RnfD_RnfE"/>
    <property type="match status" value="1"/>
</dbReference>
<gene>
    <name evidence="1" type="primary">rnfD</name>
    <name type="ordered locus">PLES_15231</name>
</gene>